<organism>
    <name type="scientific">Dictyostelium discoideum</name>
    <name type="common">Social amoeba</name>
    <dbReference type="NCBI Taxonomy" id="44689"/>
    <lineage>
        <taxon>Eukaryota</taxon>
        <taxon>Amoebozoa</taxon>
        <taxon>Evosea</taxon>
        <taxon>Eumycetozoa</taxon>
        <taxon>Dictyostelia</taxon>
        <taxon>Dictyosteliales</taxon>
        <taxon>Dictyosteliaceae</taxon>
        <taxon>Dictyostelium</taxon>
    </lineage>
</organism>
<name>STATA_DICDI</name>
<dbReference type="EMBL" id="Y13097">
    <property type="protein sequence ID" value="CAA73551.1"/>
    <property type="molecule type" value="mRNA"/>
</dbReference>
<dbReference type="EMBL" id="AAFI02000041">
    <property type="protein sequence ID" value="EAL66672.1"/>
    <property type="molecule type" value="Genomic_DNA"/>
</dbReference>
<dbReference type="RefSeq" id="XP_640661.1">
    <property type="nucleotide sequence ID" value="XM_635569.1"/>
</dbReference>
<dbReference type="PDB" id="1UUR">
    <property type="method" value="X-ray"/>
    <property type="resolution" value="2.70 A"/>
    <property type="chains" value="A=235-707"/>
</dbReference>
<dbReference type="PDB" id="1UUS">
    <property type="method" value="X-ray"/>
    <property type="resolution" value="2.80 A"/>
    <property type="chains" value="A=235-707"/>
</dbReference>
<dbReference type="PDBsum" id="1UUR"/>
<dbReference type="PDBsum" id="1UUS"/>
<dbReference type="SMR" id="O00910"/>
<dbReference type="FunCoup" id="O00910">
    <property type="interactions" value="43"/>
</dbReference>
<dbReference type="STRING" id="44689.O00910"/>
<dbReference type="GlyGen" id="O00910">
    <property type="glycosylation" value="1 site"/>
</dbReference>
<dbReference type="iPTMnet" id="O00910"/>
<dbReference type="PaxDb" id="44689-DDB0215388"/>
<dbReference type="ABCD" id="O00910">
    <property type="antibodies" value="10 sequenced antibodies"/>
</dbReference>
<dbReference type="EnsemblProtists" id="EAL66672">
    <property type="protein sequence ID" value="EAL66672"/>
    <property type="gene ID" value="DDB_G0281381"/>
</dbReference>
<dbReference type="GeneID" id="8623045"/>
<dbReference type="KEGG" id="ddi:DDB_G0281381"/>
<dbReference type="dictyBase" id="DDB_G0281381">
    <property type="gene designation" value="dstA"/>
</dbReference>
<dbReference type="VEuPathDB" id="AmoebaDB:DDB_G0281381"/>
<dbReference type="eggNOG" id="KOG3667">
    <property type="taxonomic scope" value="Eukaryota"/>
</dbReference>
<dbReference type="HOGENOM" id="CLU_390520_0_0_1"/>
<dbReference type="InParanoid" id="O00910"/>
<dbReference type="OMA" id="QMNTEMS"/>
<dbReference type="PhylomeDB" id="O00910"/>
<dbReference type="Reactome" id="R-DDI-1059683">
    <property type="pathway name" value="Interleukin-6 signaling"/>
</dbReference>
<dbReference type="Reactome" id="R-DDI-1169408">
    <property type="pathway name" value="ISG15 antiviral mechanism"/>
</dbReference>
<dbReference type="Reactome" id="R-DDI-201556">
    <property type="pathway name" value="Signaling by ALK"/>
</dbReference>
<dbReference type="Reactome" id="R-DDI-3249367">
    <property type="pathway name" value="STAT6-mediated induction of chemokines"/>
</dbReference>
<dbReference type="Reactome" id="R-DDI-6783783">
    <property type="pathway name" value="Interleukin-10 signaling"/>
</dbReference>
<dbReference type="Reactome" id="R-DDI-6785807">
    <property type="pathway name" value="Interleukin-4 and Interleukin-13 signaling"/>
</dbReference>
<dbReference type="Reactome" id="R-DDI-877300">
    <property type="pathway name" value="Interferon gamma signaling"/>
</dbReference>
<dbReference type="Reactome" id="R-DDI-8854691">
    <property type="pathway name" value="Interleukin-20 family signaling"/>
</dbReference>
<dbReference type="Reactome" id="R-DDI-8983432">
    <property type="pathway name" value="Interleukin-15 signaling"/>
</dbReference>
<dbReference type="Reactome" id="R-DDI-8984722">
    <property type="pathway name" value="Interleukin-35 Signalling"/>
</dbReference>
<dbReference type="Reactome" id="R-DDI-8985947">
    <property type="pathway name" value="Interleukin-9 signaling"/>
</dbReference>
<dbReference type="Reactome" id="R-DDI-9008059">
    <property type="pathway name" value="Interleukin-37 signaling"/>
</dbReference>
<dbReference type="Reactome" id="R-DDI-9020591">
    <property type="pathway name" value="Interleukin-12 signaling"/>
</dbReference>
<dbReference type="Reactome" id="R-DDI-9020933">
    <property type="pathway name" value="Interleukin-23 signaling"/>
</dbReference>
<dbReference type="Reactome" id="R-DDI-9020956">
    <property type="pathway name" value="Interleukin-27 signaling"/>
</dbReference>
<dbReference type="Reactome" id="R-DDI-909733">
    <property type="pathway name" value="Interferon alpha/beta signaling"/>
</dbReference>
<dbReference type="Reactome" id="R-DDI-9701898">
    <property type="pathway name" value="STAT3 nuclear events downstream of ALK signaling"/>
</dbReference>
<dbReference type="Reactome" id="R-DDI-9860927">
    <property type="pathway name" value="Turbulent (oscillatory, disturbed) flow shear stress activates signaling by PIEZO1 and integrins in endothelial cells"/>
</dbReference>
<dbReference type="EvolutionaryTrace" id="O00910"/>
<dbReference type="PRO" id="PR:O00910"/>
<dbReference type="Proteomes" id="UP000002195">
    <property type="component" value="Chromosome 3"/>
</dbReference>
<dbReference type="GO" id="GO:0005737">
    <property type="term" value="C:cytoplasm"/>
    <property type="evidence" value="ECO:0000318"/>
    <property type="project" value="GO_Central"/>
</dbReference>
<dbReference type="GO" id="GO:0005829">
    <property type="term" value="C:cytosol"/>
    <property type="evidence" value="ECO:0000314"/>
    <property type="project" value="dictyBase"/>
</dbReference>
<dbReference type="GO" id="GO:0005634">
    <property type="term" value="C:nucleus"/>
    <property type="evidence" value="ECO:0000314"/>
    <property type="project" value="dictyBase"/>
</dbReference>
<dbReference type="GO" id="GO:0003677">
    <property type="term" value="F:DNA binding"/>
    <property type="evidence" value="ECO:0000314"/>
    <property type="project" value="dictyBase"/>
</dbReference>
<dbReference type="GO" id="GO:0000981">
    <property type="term" value="F:DNA-binding transcription factor activity, RNA polymerase II-specific"/>
    <property type="evidence" value="ECO:0000318"/>
    <property type="project" value="GO_Central"/>
</dbReference>
<dbReference type="GO" id="GO:0042802">
    <property type="term" value="F:identical protein binding"/>
    <property type="evidence" value="ECO:0000353"/>
    <property type="project" value="dictyBase"/>
</dbReference>
<dbReference type="GO" id="GO:0000978">
    <property type="term" value="F:RNA polymerase II cis-regulatory region sequence-specific DNA binding"/>
    <property type="evidence" value="ECO:0000318"/>
    <property type="project" value="GO_Central"/>
</dbReference>
<dbReference type="GO" id="GO:0007259">
    <property type="term" value="P:cell surface receptor signaling pathway via JAK-STAT"/>
    <property type="evidence" value="ECO:0000318"/>
    <property type="project" value="GO_Central"/>
</dbReference>
<dbReference type="GO" id="GO:0097696">
    <property type="term" value="P:cell surface receptor signaling pathway via STAT"/>
    <property type="evidence" value="ECO:0000314"/>
    <property type="project" value="dictyBase"/>
</dbReference>
<dbReference type="GO" id="GO:0031154">
    <property type="term" value="P:culmination involved in sorocarp development"/>
    <property type="evidence" value="ECO:0000315"/>
    <property type="project" value="dictyBase"/>
</dbReference>
<dbReference type="GO" id="GO:0006952">
    <property type="term" value="P:defense response"/>
    <property type="evidence" value="ECO:0000318"/>
    <property type="project" value="GO_Central"/>
</dbReference>
<dbReference type="GO" id="GO:0045892">
    <property type="term" value="P:negative regulation of DNA-templated transcription"/>
    <property type="evidence" value="ECO:0000315"/>
    <property type="project" value="dictyBase"/>
</dbReference>
<dbReference type="GO" id="GO:0010628">
    <property type="term" value="P:positive regulation of gene expression"/>
    <property type="evidence" value="ECO:0000314"/>
    <property type="project" value="dictyBase"/>
</dbReference>
<dbReference type="GO" id="GO:0042127">
    <property type="term" value="P:regulation of cell population proliferation"/>
    <property type="evidence" value="ECO:0000318"/>
    <property type="project" value="GO_Central"/>
</dbReference>
<dbReference type="GO" id="GO:0010468">
    <property type="term" value="P:regulation of gene expression"/>
    <property type="evidence" value="ECO:0000314"/>
    <property type="project" value="dictyBase"/>
</dbReference>
<dbReference type="GO" id="GO:0006357">
    <property type="term" value="P:regulation of transcription by RNA polymerase II"/>
    <property type="evidence" value="ECO:0000318"/>
    <property type="project" value="GO_Central"/>
</dbReference>
<dbReference type="GO" id="GO:0030587">
    <property type="term" value="P:sorocarp development"/>
    <property type="evidence" value="ECO:0007001"/>
    <property type="project" value="dictyBase"/>
</dbReference>
<dbReference type="GO" id="GO:0031149">
    <property type="term" value="P:sorocarp stalk cell differentiation"/>
    <property type="evidence" value="ECO:0000315"/>
    <property type="project" value="dictyBase"/>
</dbReference>
<dbReference type="CDD" id="cd09919">
    <property type="entry name" value="SH2_STAT_family"/>
    <property type="match status" value="1"/>
</dbReference>
<dbReference type="FunFam" id="1.10.238.10:FF:000446">
    <property type="entry name" value="Signal transducer and activator of transcription"/>
    <property type="match status" value="1"/>
</dbReference>
<dbReference type="FunFam" id="2.60.40.340:FF:000007">
    <property type="entry name" value="Signal transducer and activator of transcription"/>
    <property type="match status" value="1"/>
</dbReference>
<dbReference type="FunFam" id="3.30.505.10:FF:000099">
    <property type="entry name" value="Signal transducer and activator of transcription"/>
    <property type="match status" value="1"/>
</dbReference>
<dbReference type="Gene3D" id="1.10.238.10">
    <property type="entry name" value="EF-hand"/>
    <property type="match status" value="1"/>
</dbReference>
<dbReference type="Gene3D" id="2.60.40.340">
    <property type="entry name" value="Rel homology domain (RHD), DNA-binding domain"/>
    <property type="match status" value="1"/>
</dbReference>
<dbReference type="Gene3D" id="3.30.505.10">
    <property type="entry name" value="SH2 domain"/>
    <property type="match status" value="1"/>
</dbReference>
<dbReference type="Gene3D" id="1.20.58.240">
    <property type="entry name" value="STAT, domain 1"/>
    <property type="match status" value="1"/>
</dbReference>
<dbReference type="IDEAL" id="IID50264"/>
<dbReference type="InterPro" id="IPR041604">
    <property type="entry name" value="EF-hand_12"/>
</dbReference>
<dbReference type="InterPro" id="IPR008967">
    <property type="entry name" value="p53-like_TF_DNA-bd_sf"/>
</dbReference>
<dbReference type="InterPro" id="IPR037059">
    <property type="entry name" value="RHD_DNA_bind_dom_sf"/>
</dbReference>
<dbReference type="InterPro" id="IPR000980">
    <property type="entry name" value="SH2"/>
</dbReference>
<dbReference type="InterPro" id="IPR036860">
    <property type="entry name" value="SH2_dom_sf"/>
</dbReference>
<dbReference type="InterPro" id="IPR001217">
    <property type="entry name" value="STAT"/>
</dbReference>
<dbReference type="InterPro" id="IPR015988">
    <property type="entry name" value="STAT_TF_coiled-coil"/>
</dbReference>
<dbReference type="InterPro" id="IPR015347">
    <property type="entry name" value="STAT_TF_homologue_coiled-coil"/>
</dbReference>
<dbReference type="InterPro" id="IPR041410">
    <property type="entry name" value="STATa_Ig"/>
</dbReference>
<dbReference type="PANTHER" id="PTHR11801">
    <property type="entry name" value="SIGNAL TRANSDUCER AND ACTIVATOR OF TRANSCRIPTION"/>
    <property type="match status" value="1"/>
</dbReference>
<dbReference type="Pfam" id="PF09267">
    <property type="entry name" value="Dict-STAT-coil"/>
    <property type="match status" value="1"/>
</dbReference>
<dbReference type="Pfam" id="PF17901">
    <property type="entry name" value="EF-hand_12"/>
    <property type="match status" value="1"/>
</dbReference>
<dbReference type="Pfam" id="PF00017">
    <property type="entry name" value="SH2"/>
    <property type="match status" value="1"/>
</dbReference>
<dbReference type="Pfam" id="PF18214">
    <property type="entry name" value="STATa_Ig"/>
    <property type="match status" value="1"/>
</dbReference>
<dbReference type="SMART" id="SM00252">
    <property type="entry name" value="SH2"/>
    <property type="match status" value="1"/>
</dbReference>
<dbReference type="SUPFAM" id="SSF49417">
    <property type="entry name" value="p53-like transcription factors"/>
    <property type="match status" value="1"/>
</dbReference>
<dbReference type="SUPFAM" id="SSF55550">
    <property type="entry name" value="SH2 domain"/>
    <property type="match status" value="1"/>
</dbReference>
<dbReference type="SUPFAM" id="SSF47655">
    <property type="entry name" value="STAT"/>
    <property type="match status" value="1"/>
</dbReference>
<dbReference type="PROSITE" id="PS50001">
    <property type="entry name" value="SH2"/>
    <property type="match status" value="1"/>
</dbReference>
<gene>
    <name type="primary">dstA</name>
    <name type="synonym">stat5</name>
    <name type="synonym">statA</name>
    <name type="ORF">DDB_G0281381</name>
</gene>
<accession>O00910</accession>
<accession>Q54U00</accession>
<evidence type="ECO:0000250" key="1"/>
<evidence type="ECO:0000255" key="2">
    <source>
        <dbReference type="PROSITE-ProRule" id="PRU00191"/>
    </source>
</evidence>
<evidence type="ECO:0000256" key="3">
    <source>
        <dbReference type="SAM" id="MobiDB-lite"/>
    </source>
</evidence>
<evidence type="ECO:0000269" key="4">
    <source>
    </source>
</evidence>
<evidence type="ECO:0000269" key="5">
    <source>
    </source>
</evidence>
<evidence type="ECO:0000269" key="6">
    <source>
    </source>
</evidence>
<evidence type="ECO:0000269" key="7">
    <source>
    </source>
</evidence>
<evidence type="ECO:0000269" key="8">
    <source>
    </source>
</evidence>
<evidence type="ECO:0000305" key="9"/>
<evidence type="ECO:0007829" key="10">
    <source>
        <dbReference type="PDB" id="1UUR"/>
    </source>
</evidence>
<evidence type="ECO:0007829" key="11">
    <source>
        <dbReference type="PDB" id="1UUS"/>
    </source>
</evidence>
<sequence>MSSAEFSMDDFEDTFDSNATISTKDLFEGSDRLPLNQSINTTIQNLYLPNGGFAIGDQSQQQYYQAMPPLNQSDQFNLGRSNNLTPRTNQLQQLQQQQQQQQQPQQQQQQQTYGTQSPIHMSQTPSSPLSSPLPSPTPFSRQQSYNNNNSNNTSSSQNYNNNNININNNNNNNNTNNNNNNNNGNNSNGNNGNNNNNNNNNNNNNTNNNNNNNQQQQQQQQQQQQQQQQQQQQQQQGNPNLSSPQPILDTIYKLLSEQEQTLVQMIHEQSLLLNRLPPTLDENSLAPLKSLSQKQITLSGQMNTEMSALDATKKGMILEPTDLAKLFALKQDLQIQFKQLSLLHNEIQSILNPQHSAPKPNVALVLKSQPFPVVISKGKQLGENQLVVLVLTGARSNFHINGPVKATMICDSHPTNKNNPTTPLEMDSQPIYPATLTAHFPLKFLAGTRKCSVNLKFGVNIRDLDNVTTTVESDASNPFVVITNECQWEGSAGVLLKKDAFDGQLEITWAQFINTLQRHFLIATKQDPVRPKRPLSSYDLKYIQTHFFGNRSIIHQQDFDKFWVWFGKSMQTLRYQRHISTLWQEGIIYGYMGRQEVNDALQNQDPGTFIIRFSERNPGQFGIAYIGVEMPARIKHYLVQPNDTAAAKKTFPDFLSEHSQFVNLLQWTKDTNGAPRFLKLHKDTALGSFAPKRTAPVPVGGYEPLNS</sequence>
<proteinExistence type="evidence at protein level"/>
<feature type="chain" id="PRO_0000328082" description="Signal transducer and activator of transcription A">
    <location>
        <begin position="1"/>
        <end position="707"/>
    </location>
</feature>
<feature type="domain" description="SH2" evidence="2">
    <location>
        <begin position="583"/>
        <end position="686"/>
    </location>
</feature>
<feature type="DNA-binding region">
    <location>
        <begin position="443"/>
        <end position="487"/>
    </location>
</feature>
<feature type="region of interest" description="Disordered" evidence="3">
    <location>
        <begin position="70"/>
        <end position="246"/>
    </location>
</feature>
<feature type="coiled-coil region" evidence="6">
    <location>
        <begin position="242"/>
        <end position="356"/>
    </location>
</feature>
<feature type="compositionally biased region" description="Polar residues" evidence="3">
    <location>
        <begin position="70"/>
        <end position="89"/>
    </location>
</feature>
<feature type="compositionally biased region" description="Low complexity" evidence="3">
    <location>
        <begin position="90"/>
        <end position="111"/>
    </location>
</feature>
<feature type="compositionally biased region" description="Polar residues" evidence="3">
    <location>
        <begin position="112"/>
        <end position="121"/>
    </location>
</feature>
<feature type="compositionally biased region" description="Low complexity" evidence="3">
    <location>
        <begin position="142"/>
        <end position="238"/>
    </location>
</feature>
<feature type="site" description="Interaction with DNA" evidence="1">
    <location>
        <position position="380"/>
    </location>
</feature>
<feature type="site" description="Interaction with DNA" evidence="1">
    <location>
        <position position="577"/>
    </location>
</feature>
<feature type="modified residue" description="Phosphotyrosine" evidence="8">
    <location>
        <position position="702"/>
    </location>
</feature>
<feature type="mutagenesis site" description="Loss of DNA binding." evidence="6">
    <original>K</original>
    <variation>D</variation>
    <location>
        <position position="443"/>
    </location>
</feature>
<feature type="mutagenesis site" description="About 3-fold reduced DNA binding." evidence="6">
    <original>RK</original>
    <variation>DD</variation>
    <location>
        <begin position="449"/>
        <end position="450"/>
    </location>
</feature>
<feature type="mutagenesis site" description="Loss of DNA binding." evidence="6">
    <original>N</original>
    <variation>A</variation>
    <location>
        <position position="484"/>
    </location>
</feature>
<feature type="helix" evidence="10">
    <location>
        <begin position="245"/>
        <end position="274"/>
    </location>
</feature>
<feature type="helix" evidence="10">
    <location>
        <begin position="282"/>
        <end position="315"/>
    </location>
</feature>
<feature type="helix" evidence="10">
    <location>
        <begin position="320"/>
        <end position="351"/>
    </location>
</feature>
<feature type="strand" evidence="10">
    <location>
        <begin position="363"/>
        <end position="368"/>
    </location>
</feature>
<feature type="strand" evidence="10">
    <location>
        <begin position="374"/>
        <end position="376"/>
    </location>
</feature>
<feature type="turn" evidence="10">
    <location>
        <begin position="383"/>
        <end position="385"/>
    </location>
</feature>
<feature type="strand" evidence="10">
    <location>
        <begin position="386"/>
        <end position="391"/>
    </location>
</feature>
<feature type="strand" evidence="10">
    <location>
        <begin position="398"/>
        <end position="409"/>
    </location>
</feature>
<feature type="turn" evidence="10">
    <location>
        <begin position="433"/>
        <end position="436"/>
    </location>
</feature>
<feature type="strand" evidence="10">
    <location>
        <begin position="437"/>
        <end position="439"/>
    </location>
</feature>
<feature type="strand" evidence="10">
    <location>
        <begin position="453"/>
        <end position="463"/>
    </location>
</feature>
<feature type="strand" evidence="10">
    <location>
        <begin position="468"/>
        <end position="472"/>
    </location>
</feature>
<feature type="strand" evidence="10">
    <location>
        <begin position="479"/>
        <end position="484"/>
    </location>
</feature>
<feature type="turn" evidence="10">
    <location>
        <begin position="485"/>
        <end position="487"/>
    </location>
</feature>
<feature type="helix" evidence="10">
    <location>
        <begin position="488"/>
        <end position="501"/>
    </location>
</feature>
<feature type="strand" evidence="10">
    <location>
        <begin position="505"/>
        <end position="508"/>
    </location>
</feature>
<feature type="helix" evidence="10">
    <location>
        <begin position="509"/>
        <end position="523"/>
    </location>
</feature>
<feature type="strand" evidence="10">
    <location>
        <begin position="528"/>
        <end position="530"/>
    </location>
</feature>
<feature type="helix" evidence="10">
    <location>
        <begin position="537"/>
        <end position="546"/>
    </location>
</feature>
<feature type="turn" evidence="10">
    <location>
        <begin position="547"/>
        <end position="550"/>
    </location>
</feature>
<feature type="strand" evidence="10">
    <location>
        <begin position="552"/>
        <end position="555"/>
    </location>
</feature>
<feature type="helix" evidence="10">
    <location>
        <begin position="556"/>
        <end position="575"/>
    </location>
</feature>
<feature type="helix" evidence="10">
    <location>
        <begin position="579"/>
        <end position="584"/>
    </location>
</feature>
<feature type="helix" evidence="10">
    <location>
        <begin position="594"/>
        <end position="599"/>
    </location>
</feature>
<feature type="turn" evidence="11">
    <location>
        <begin position="601"/>
        <end position="603"/>
    </location>
</feature>
<feature type="strand" evidence="10">
    <location>
        <begin position="609"/>
        <end position="613"/>
    </location>
</feature>
<feature type="strand" evidence="10">
    <location>
        <begin position="615"/>
        <end position="617"/>
    </location>
</feature>
<feature type="strand" evidence="10">
    <location>
        <begin position="621"/>
        <end position="626"/>
    </location>
</feature>
<feature type="strand" evidence="10">
    <location>
        <begin position="628"/>
        <end position="631"/>
    </location>
</feature>
<feature type="strand" evidence="10">
    <location>
        <begin position="634"/>
        <end position="638"/>
    </location>
</feature>
<feature type="helix" evidence="10">
    <location>
        <begin position="641"/>
        <end position="643"/>
    </location>
</feature>
<feature type="turn" evidence="10">
    <location>
        <begin position="646"/>
        <end position="648"/>
    </location>
</feature>
<feature type="helix" evidence="10">
    <location>
        <begin position="651"/>
        <end position="655"/>
    </location>
</feature>
<feature type="strand" evidence="10">
    <location>
        <begin position="663"/>
        <end position="669"/>
    </location>
</feature>
<feature type="strand" evidence="10">
    <location>
        <begin position="675"/>
        <end position="679"/>
    </location>
</feature>
<feature type="helix" evidence="10">
    <location>
        <begin position="682"/>
        <end position="685"/>
    </location>
</feature>
<feature type="helix" evidence="10">
    <location>
        <begin position="687"/>
        <end position="689"/>
    </location>
</feature>
<comment type="function">
    <text evidence="4 5 6 7">Transcription factor that binds to 5'-TTGAATTGA-3' elements in the promoter region of target genes. Functions as a repressor of the ecmB gene. Regulates the differentiation of prestalk cells during development.</text>
</comment>
<comment type="subunit">
    <text evidence="6 7">Monomer, in the absence of tyrosine phosphorylation. Homodimer, or heterodimer with another family member, when tyrosine phosphorylated.</text>
</comment>
<comment type="subcellular location">
    <subcellularLocation>
        <location>Cytoplasm</location>
    </subcellularLocation>
    <subcellularLocation>
        <location>Nucleus</location>
    </subcellularLocation>
    <text>Cytoplasmic in growing cells. Translocated into the nucleus in response to cAMP-induced tyrosine phosphorylation. Nuclear at the tight mound stage and in the upper, prestalk region of tipped aggregates and in cells at the tip of the slug. Subject to crm1-dependent nuclear export.</text>
</comment>
<comment type="developmental stage">
    <text evidence="7 8">Constitutively expressed with a slight increase during the tight mound stage (at protein level). Detected at very low levels in growing cells and aggregates up to the loose mound stage. Highly expressed in tipped aggregates and in the Mexican hat stage. Expressed at lower levels in early and late culminants and in fruiting bodies.</text>
</comment>
<comment type="PTM">
    <text evidence="8">Tyrosine phosphorylated in response to cAMP. Not tyrosine phosphorylated in growing cells. Tyrosine phosphorylation is first detected at the tight mound stage, continues throughout the slug stage and early culmination, and starts to decrease at mid-culmination. Barely detectable in fruiting bodies.</text>
</comment>
<comment type="disruption phenotype">
    <text evidence="4">Cells are hypersensitive to the chlorinated hexaphenone DIF. They form slugs, but there is little or no stalk cell differentiation. After several days of developmental arrest very small spore masses appear that are supported by columns of apparently undifferentiated cells.</text>
</comment>
<comment type="similarity">
    <text evidence="9">Belongs to the transcription factor STAT family.</text>
</comment>
<protein>
    <recommendedName>
        <fullName>Signal transducer and activator of transcription A</fullName>
    </recommendedName>
    <alternativeName>
        <fullName>Dd-STATa</fullName>
    </alternativeName>
    <alternativeName>
        <fullName>STAT5 homolog A</fullName>
    </alternativeName>
</protein>
<keyword id="KW-0002">3D-structure</keyword>
<keyword id="KW-0175">Coiled coil</keyword>
<keyword id="KW-0963">Cytoplasm</keyword>
<keyword id="KW-0903">Direct protein sequencing</keyword>
<keyword id="KW-0238">DNA-binding</keyword>
<keyword id="KW-0539">Nucleus</keyword>
<keyword id="KW-0597">Phosphoprotein</keyword>
<keyword id="KW-1185">Reference proteome</keyword>
<keyword id="KW-0678">Repressor</keyword>
<keyword id="KW-0727">SH2 domain</keyword>
<keyword id="KW-0804">Transcription</keyword>
<keyword id="KW-0805">Transcription regulation</keyword>
<reference key="1">
    <citation type="journal article" date="1997" name="Cell">
        <title>SH2 signaling in a lower eukaryote: a STAT protein that regulates stalk cell differentiation in dictyostelium.</title>
        <authorList>
            <person name="Kawata T."/>
            <person name="Shevchenko A."/>
            <person name="Fukuzawa M."/>
            <person name="Jermyn K.A."/>
            <person name="Totty N.F."/>
            <person name="Zhukovskaya N.V."/>
            <person name="Sterling A.E."/>
            <person name="Mann M."/>
            <person name="Williams J.G."/>
        </authorList>
    </citation>
    <scope>NUCLEOTIDE SEQUENCE [MRNA]</scope>
    <scope>PARTIAL PROTEIN SEQUENCE</scope>
    <scope>FUNCTION</scope>
    <scope>SUBUNIT</scope>
    <scope>DEVELOPMENTAL STAGE</scope>
    <scope>TYROSINE PHOSPHORYLATION</scope>
    <scope>IDENTIFICATION BY MASS SPECTROMETRY</scope>
    <source>
        <strain>AX2</strain>
    </source>
</reference>
<reference key="2">
    <citation type="journal article" date="2005" name="Nature">
        <title>The genome of the social amoeba Dictyostelium discoideum.</title>
        <authorList>
            <person name="Eichinger L."/>
            <person name="Pachebat J.A."/>
            <person name="Gloeckner G."/>
            <person name="Rajandream M.A."/>
            <person name="Sucgang R."/>
            <person name="Berriman M."/>
            <person name="Song J."/>
            <person name="Olsen R."/>
            <person name="Szafranski K."/>
            <person name="Xu Q."/>
            <person name="Tunggal B."/>
            <person name="Kummerfeld S."/>
            <person name="Madera M."/>
            <person name="Konfortov B.A."/>
            <person name="Rivero F."/>
            <person name="Bankier A.T."/>
            <person name="Lehmann R."/>
            <person name="Hamlin N."/>
            <person name="Davies R."/>
            <person name="Gaudet P."/>
            <person name="Fey P."/>
            <person name="Pilcher K."/>
            <person name="Chen G."/>
            <person name="Saunders D."/>
            <person name="Sodergren E.J."/>
            <person name="Davis P."/>
            <person name="Kerhornou A."/>
            <person name="Nie X."/>
            <person name="Hall N."/>
            <person name="Anjard C."/>
            <person name="Hemphill L."/>
            <person name="Bason N."/>
            <person name="Farbrother P."/>
            <person name="Desany B."/>
            <person name="Just E."/>
            <person name="Morio T."/>
            <person name="Rost R."/>
            <person name="Churcher C.M."/>
            <person name="Cooper J."/>
            <person name="Haydock S."/>
            <person name="van Driessche N."/>
            <person name="Cronin A."/>
            <person name="Goodhead I."/>
            <person name="Muzny D.M."/>
            <person name="Mourier T."/>
            <person name="Pain A."/>
            <person name="Lu M."/>
            <person name="Harper D."/>
            <person name="Lindsay R."/>
            <person name="Hauser H."/>
            <person name="James K.D."/>
            <person name="Quiles M."/>
            <person name="Madan Babu M."/>
            <person name="Saito T."/>
            <person name="Buchrieser C."/>
            <person name="Wardroper A."/>
            <person name="Felder M."/>
            <person name="Thangavelu M."/>
            <person name="Johnson D."/>
            <person name="Knights A."/>
            <person name="Loulseged H."/>
            <person name="Mungall K.L."/>
            <person name="Oliver K."/>
            <person name="Price C."/>
            <person name="Quail M.A."/>
            <person name="Urushihara H."/>
            <person name="Hernandez J."/>
            <person name="Rabbinowitsch E."/>
            <person name="Steffen D."/>
            <person name="Sanders M."/>
            <person name="Ma J."/>
            <person name="Kohara Y."/>
            <person name="Sharp S."/>
            <person name="Simmonds M.N."/>
            <person name="Spiegler S."/>
            <person name="Tivey A."/>
            <person name="Sugano S."/>
            <person name="White B."/>
            <person name="Walker D."/>
            <person name="Woodward J.R."/>
            <person name="Winckler T."/>
            <person name="Tanaka Y."/>
            <person name="Shaulsky G."/>
            <person name="Schleicher M."/>
            <person name="Weinstock G.M."/>
            <person name="Rosenthal A."/>
            <person name="Cox E.C."/>
            <person name="Chisholm R.L."/>
            <person name="Gibbs R.A."/>
            <person name="Loomis W.F."/>
            <person name="Platzer M."/>
            <person name="Kay R.R."/>
            <person name="Williams J.G."/>
            <person name="Dear P.H."/>
            <person name="Noegel A.A."/>
            <person name="Barrell B.G."/>
            <person name="Kuspa A."/>
        </authorList>
    </citation>
    <scope>NUCLEOTIDE SEQUENCE [LARGE SCALE GENOMIC DNA]</scope>
    <source>
        <strain>AX4</strain>
    </source>
</reference>
<reference key="3">
    <citation type="journal article" date="1998" name="EMBO J.">
        <title>Developmentally and spatially regulated activation of a Dictyostelium STAT protein by a serpentine receptor.</title>
        <authorList>
            <person name="Araki T."/>
            <person name="Gamper M."/>
            <person name="Early A."/>
            <person name="Fukuzawa M."/>
            <person name="Abe T."/>
            <person name="Kawata T."/>
            <person name="Kim E."/>
            <person name="Firtel R.A."/>
            <person name="Williams J.G."/>
        </authorList>
    </citation>
    <scope>PHOSPHORYLATION AT TYR-702</scope>
    <scope>SUBCELLULAR LOCATION</scope>
    <scope>DEVELOPMENTAL STAGE</scope>
</reference>
<reference key="4">
    <citation type="journal article" date="2001" name="Dev. Biol.">
        <title>The phosphorylated C-terminus of cAR1 plays a role in cell-type-specific gene expression and STATa tyrosine phosphorylation.</title>
        <authorList>
            <person name="Briscoe C."/>
            <person name="Moniakis J."/>
            <person name="Kim J.-Y."/>
            <person name="Brown J.M."/>
            <person name="Hereld D."/>
            <person name="Devreotes P.N."/>
            <person name="Firtel R.A."/>
        </authorList>
    </citation>
    <scope>CYCLIC AMP-INDUCED PHOSPHORYLATION</scope>
</reference>
<reference key="5">
    <citation type="journal article" date="1999" name="Development">
        <title>Evidence that the Dictyostelium Dd-STATa protein is a repressor that regulates commitment to stalk cell differentiation and is also required for efficient chemotaxis.</title>
        <authorList>
            <person name="Mohanty S."/>
            <person name="Jermyn K.A."/>
            <person name="Early A."/>
            <person name="Kawata T."/>
            <person name="Aubry L."/>
            <person name="Ceccarelli A."/>
            <person name="Schaap P."/>
            <person name="Williams J.G."/>
            <person name="Firtel R.A."/>
        </authorList>
    </citation>
    <scope>FUNCTION</scope>
    <scope>DISRUPTION PHENOTYPE</scope>
</reference>
<reference key="6">
    <citation type="journal article" date="2001" name="Dev. Biol.">
        <title>Protein tyrosine phosphatase PTP1 negatively regulates Dictyostelium STATa and is required for proper cell-type proportioning.</title>
        <authorList>
            <person name="Early A."/>
            <person name="Gamper M."/>
            <person name="Moniakis J."/>
            <person name="Kim E."/>
            <person name="Hunter T."/>
            <person name="Williams J.G."/>
            <person name="Firtel R.A."/>
        </authorList>
    </citation>
    <scope>SUBCELLULAR LOCATION</scope>
    <scope>FUNCTION</scope>
    <scope>MODULATION OF TYROSINE PHOSPHORYLATION</scope>
</reference>
<reference key="7">
    <citation type="journal article" date="2004" name="Mol. Cell">
        <title>Structure of an activated Dictyostelium STAT in its DNA-unbound form.</title>
        <authorList>
            <person name="Soler-Lopez M."/>
            <person name="Petosa C."/>
            <person name="Fukuzawa M."/>
            <person name="Ravelli R."/>
            <person name="Williams J.G."/>
            <person name="Mueller C.W."/>
        </authorList>
    </citation>
    <scope>X-RAY CRYSTALLOGRAPHY (2.7 ANGSTROMS) OF 235-707 OF TYROSINE PHOSPHORYLATED HOMODIMER</scope>
    <scope>COILED-COIL DOMAIN</scope>
    <scope>FUNCTION</scope>
    <scope>SUBUNIT</scope>
    <scope>MUTAGENESIS OF LYS-443; 449-ARG-LYS-450 AND ASN-484</scope>
</reference>